<dbReference type="EC" id="1.6.5.-" evidence="1"/>
<dbReference type="EC" id="1.7.1.17" evidence="1"/>
<dbReference type="EMBL" id="AL591688">
    <property type="protein sequence ID" value="CAC45915.1"/>
    <property type="molecule type" value="Genomic_DNA"/>
</dbReference>
<dbReference type="RefSeq" id="NP_385442.1">
    <property type="nucleotide sequence ID" value="NC_003047.1"/>
</dbReference>
<dbReference type="RefSeq" id="WP_010969187.1">
    <property type="nucleotide sequence ID" value="NC_003047.1"/>
</dbReference>
<dbReference type="SMR" id="Q92QI7"/>
<dbReference type="EnsemblBacteria" id="CAC45915">
    <property type="protein sequence ID" value="CAC45915"/>
    <property type="gene ID" value="SMc01329"/>
</dbReference>
<dbReference type="KEGG" id="sme:SMc01329"/>
<dbReference type="PATRIC" id="fig|266834.11.peg.2750"/>
<dbReference type="eggNOG" id="COG1182">
    <property type="taxonomic scope" value="Bacteria"/>
</dbReference>
<dbReference type="HOGENOM" id="CLU_088964_0_0_5"/>
<dbReference type="OrthoDB" id="9787136at2"/>
<dbReference type="Proteomes" id="UP000001976">
    <property type="component" value="Chromosome"/>
</dbReference>
<dbReference type="GO" id="GO:0009055">
    <property type="term" value="F:electron transfer activity"/>
    <property type="evidence" value="ECO:0007669"/>
    <property type="project" value="UniProtKB-UniRule"/>
</dbReference>
<dbReference type="GO" id="GO:0010181">
    <property type="term" value="F:FMN binding"/>
    <property type="evidence" value="ECO:0007669"/>
    <property type="project" value="UniProtKB-UniRule"/>
</dbReference>
<dbReference type="GO" id="GO:0016652">
    <property type="term" value="F:oxidoreductase activity, acting on NAD(P)H as acceptor"/>
    <property type="evidence" value="ECO:0007669"/>
    <property type="project" value="UniProtKB-UniRule"/>
</dbReference>
<dbReference type="GO" id="GO:0016655">
    <property type="term" value="F:oxidoreductase activity, acting on NAD(P)H, quinone or similar compound as acceptor"/>
    <property type="evidence" value="ECO:0007669"/>
    <property type="project" value="InterPro"/>
</dbReference>
<dbReference type="Gene3D" id="3.40.50.360">
    <property type="match status" value="1"/>
</dbReference>
<dbReference type="HAMAP" id="MF_01216">
    <property type="entry name" value="Azoreductase_type1"/>
    <property type="match status" value="1"/>
</dbReference>
<dbReference type="InterPro" id="IPR003680">
    <property type="entry name" value="Flavodoxin_fold"/>
</dbReference>
<dbReference type="InterPro" id="IPR029039">
    <property type="entry name" value="Flavoprotein-like_sf"/>
</dbReference>
<dbReference type="InterPro" id="IPR050104">
    <property type="entry name" value="FMN-dep_NADH:Q_OxRdtase_AzoR1"/>
</dbReference>
<dbReference type="InterPro" id="IPR023048">
    <property type="entry name" value="NADH:quinone_OxRdtase_FMN_depd"/>
</dbReference>
<dbReference type="PANTHER" id="PTHR43741">
    <property type="entry name" value="FMN-DEPENDENT NADH-AZOREDUCTASE 1"/>
    <property type="match status" value="1"/>
</dbReference>
<dbReference type="PANTHER" id="PTHR43741:SF4">
    <property type="entry name" value="FMN-DEPENDENT NADH:QUINONE OXIDOREDUCTASE"/>
    <property type="match status" value="1"/>
</dbReference>
<dbReference type="Pfam" id="PF02525">
    <property type="entry name" value="Flavodoxin_2"/>
    <property type="match status" value="1"/>
</dbReference>
<dbReference type="SUPFAM" id="SSF52218">
    <property type="entry name" value="Flavoproteins"/>
    <property type="match status" value="1"/>
</dbReference>
<name>AZOR_RHIME</name>
<evidence type="ECO:0000255" key="1">
    <source>
        <dbReference type="HAMAP-Rule" id="MF_01216"/>
    </source>
</evidence>
<gene>
    <name evidence="1" type="primary">azoR</name>
    <name type="ordered locus">R01336</name>
    <name type="ORF">SMc01329</name>
</gene>
<comment type="function">
    <text evidence="1">Quinone reductase that provides resistance to thiol-specific stress caused by electrophilic quinones.</text>
</comment>
<comment type="function">
    <text evidence="1">Also exhibits azoreductase activity. Catalyzes the reductive cleavage of the azo bond in aromatic azo compounds to the corresponding amines.</text>
</comment>
<comment type="catalytic activity">
    <reaction evidence="1">
        <text>2 a quinone + NADH + H(+) = 2 a 1,4-benzosemiquinone + NAD(+)</text>
        <dbReference type="Rhea" id="RHEA:65952"/>
        <dbReference type="ChEBI" id="CHEBI:15378"/>
        <dbReference type="ChEBI" id="CHEBI:57540"/>
        <dbReference type="ChEBI" id="CHEBI:57945"/>
        <dbReference type="ChEBI" id="CHEBI:132124"/>
        <dbReference type="ChEBI" id="CHEBI:134225"/>
    </reaction>
</comment>
<comment type="catalytic activity">
    <reaction evidence="1">
        <text>N,N-dimethyl-1,4-phenylenediamine + anthranilate + 2 NAD(+) = 2-(4-dimethylaminophenyl)diazenylbenzoate + 2 NADH + 2 H(+)</text>
        <dbReference type="Rhea" id="RHEA:55872"/>
        <dbReference type="ChEBI" id="CHEBI:15378"/>
        <dbReference type="ChEBI" id="CHEBI:15783"/>
        <dbReference type="ChEBI" id="CHEBI:16567"/>
        <dbReference type="ChEBI" id="CHEBI:57540"/>
        <dbReference type="ChEBI" id="CHEBI:57945"/>
        <dbReference type="ChEBI" id="CHEBI:71579"/>
        <dbReference type="EC" id="1.7.1.17"/>
    </reaction>
</comment>
<comment type="cofactor">
    <cofactor evidence="1">
        <name>FMN</name>
        <dbReference type="ChEBI" id="CHEBI:58210"/>
    </cofactor>
    <text evidence="1">Binds 1 FMN per subunit.</text>
</comment>
<comment type="subunit">
    <text evidence="1">Homodimer.</text>
</comment>
<comment type="similarity">
    <text evidence="1">Belongs to the azoreductase type 1 family.</text>
</comment>
<feature type="chain" id="PRO_0000166352" description="FMN-dependent NADH:quinone oxidoreductase">
    <location>
        <begin position="1"/>
        <end position="206"/>
    </location>
</feature>
<feature type="binding site" evidence="1">
    <location>
        <begin position="15"/>
        <end position="17"/>
    </location>
    <ligand>
        <name>FMN</name>
        <dbReference type="ChEBI" id="CHEBI:58210"/>
    </ligand>
</feature>
<feature type="binding site" evidence="1">
    <location>
        <begin position="94"/>
        <end position="97"/>
    </location>
    <ligand>
        <name>FMN</name>
        <dbReference type="ChEBI" id="CHEBI:58210"/>
    </ligand>
</feature>
<feature type="binding site" evidence="1">
    <location>
        <begin position="138"/>
        <end position="141"/>
    </location>
    <ligand>
        <name>FMN</name>
        <dbReference type="ChEBI" id="CHEBI:58210"/>
    </ligand>
</feature>
<accession>Q92QI7</accession>
<organism>
    <name type="scientific">Rhizobium meliloti (strain 1021)</name>
    <name type="common">Ensifer meliloti</name>
    <name type="synonym">Sinorhizobium meliloti</name>
    <dbReference type="NCBI Taxonomy" id="266834"/>
    <lineage>
        <taxon>Bacteria</taxon>
        <taxon>Pseudomonadati</taxon>
        <taxon>Pseudomonadota</taxon>
        <taxon>Alphaproteobacteria</taxon>
        <taxon>Hyphomicrobiales</taxon>
        <taxon>Rhizobiaceae</taxon>
        <taxon>Sinorhizobium/Ensifer group</taxon>
        <taxon>Sinorhizobium</taxon>
    </lineage>
</organism>
<keyword id="KW-0285">Flavoprotein</keyword>
<keyword id="KW-0288">FMN</keyword>
<keyword id="KW-0520">NAD</keyword>
<keyword id="KW-0560">Oxidoreductase</keyword>
<keyword id="KW-1185">Reference proteome</keyword>
<sequence length="206" mass="22252">MKILHIDSGILGEHSVSRRLTSAIVSQLKADRPDAEITYRDLASERVPHLTGAQIMAPADLEGVDALLAADVRIGRQMLEEFLAADTVVVGAPMYNFSIPSQLKAWIDRLAVAGKTFRYTEAGPEGLAKGKKLIVASTRGGHYSVAPASAMDHQETYLRSVFGFFGITDIEFIRAEGLNLGPDQKQFAIAEAEKTIAEGNVLKLAS</sequence>
<protein>
    <recommendedName>
        <fullName evidence="1">FMN-dependent NADH:quinone oxidoreductase</fullName>
        <ecNumber evidence="1">1.6.5.-</ecNumber>
    </recommendedName>
    <alternativeName>
        <fullName evidence="1">Azo-dye reductase</fullName>
    </alternativeName>
    <alternativeName>
        <fullName evidence="1">FMN-dependent NADH-azo compound oxidoreductase</fullName>
    </alternativeName>
    <alternativeName>
        <fullName evidence="1">FMN-dependent NADH-azoreductase</fullName>
        <ecNumber evidence="1">1.7.1.17</ecNumber>
    </alternativeName>
</protein>
<proteinExistence type="inferred from homology"/>
<reference key="1">
    <citation type="journal article" date="2001" name="Proc. Natl. Acad. Sci. U.S.A.">
        <title>Analysis of the chromosome sequence of the legume symbiont Sinorhizobium meliloti strain 1021.</title>
        <authorList>
            <person name="Capela D."/>
            <person name="Barloy-Hubler F."/>
            <person name="Gouzy J."/>
            <person name="Bothe G."/>
            <person name="Ampe F."/>
            <person name="Batut J."/>
            <person name="Boistard P."/>
            <person name="Becker A."/>
            <person name="Boutry M."/>
            <person name="Cadieu E."/>
            <person name="Dreano S."/>
            <person name="Gloux S."/>
            <person name="Godrie T."/>
            <person name="Goffeau A."/>
            <person name="Kahn D."/>
            <person name="Kiss E."/>
            <person name="Lelaure V."/>
            <person name="Masuy D."/>
            <person name="Pohl T."/>
            <person name="Portetelle D."/>
            <person name="Puehler A."/>
            <person name="Purnelle B."/>
            <person name="Ramsperger U."/>
            <person name="Renard C."/>
            <person name="Thebault P."/>
            <person name="Vandenbol M."/>
            <person name="Weidner S."/>
            <person name="Galibert F."/>
        </authorList>
    </citation>
    <scope>NUCLEOTIDE SEQUENCE [LARGE SCALE GENOMIC DNA]</scope>
    <source>
        <strain>1021</strain>
    </source>
</reference>
<reference key="2">
    <citation type="journal article" date="2001" name="Science">
        <title>The composite genome of the legume symbiont Sinorhizobium meliloti.</title>
        <authorList>
            <person name="Galibert F."/>
            <person name="Finan T.M."/>
            <person name="Long S.R."/>
            <person name="Puehler A."/>
            <person name="Abola P."/>
            <person name="Ampe F."/>
            <person name="Barloy-Hubler F."/>
            <person name="Barnett M.J."/>
            <person name="Becker A."/>
            <person name="Boistard P."/>
            <person name="Bothe G."/>
            <person name="Boutry M."/>
            <person name="Bowser L."/>
            <person name="Buhrmester J."/>
            <person name="Cadieu E."/>
            <person name="Capela D."/>
            <person name="Chain P."/>
            <person name="Cowie A."/>
            <person name="Davis R.W."/>
            <person name="Dreano S."/>
            <person name="Federspiel N.A."/>
            <person name="Fisher R.F."/>
            <person name="Gloux S."/>
            <person name="Godrie T."/>
            <person name="Goffeau A."/>
            <person name="Golding B."/>
            <person name="Gouzy J."/>
            <person name="Gurjal M."/>
            <person name="Hernandez-Lucas I."/>
            <person name="Hong A."/>
            <person name="Huizar L."/>
            <person name="Hyman R.W."/>
            <person name="Jones T."/>
            <person name="Kahn D."/>
            <person name="Kahn M.L."/>
            <person name="Kalman S."/>
            <person name="Keating D.H."/>
            <person name="Kiss E."/>
            <person name="Komp C."/>
            <person name="Lelaure V."/>
            <person name="Masuy D."/>
            <person name="Palm C."/>
            <person name="Peck M.C."/>
            <person name="Pohl T.M."/>
            <person name="Portetelle D."/>
            <person name="Purnelle B."/>
            <person name="Ramsperger U."/>
            <person name="Surzycki R."/>
            <person name="Thebault P."/>
            <person name="Vandenbol M."/>
            <person name="Vorhoelter F.J."/>
            <person name="Weidner S."/>
            <person name="Wells D.H."/>
            <person name="Wong K."/>
            <person name="Yeh K.-C."/>
            <person name="Batut J."/>
        </authorList>
    </citation>
    <scope>NUCLEOTIDE SEQUENCE [LARGE SCALE GENOMIC DNA]</scope>
    <source>
        <strain>1021</strain>
    </source>
</reference>